<gene>
    <name evidence="1" type="primary">MMM1</name>
    <name type="ORF">PAAG_03568</name>
</gene>
<keyword id="KW-0256">Endoplasmic reticulum</keyword>
<keyword id="KW-0445">Lipid transport</keyword>
<keyword id="KW-0446">Lipid-binding</keyword>
<keyword id="KW-0472">Membrane</keyword>
<keyword id="KW-1185">Reference proteome</keyword>
<keyword id="KW-0812">Transmembrane</keyword>
<keyword id="KW-1133">Transmembrane helix</keyword>
<keyword id="KW-0813">Transport</keyword>
<name>MMM1_PARBA</name>
<reference key="1">
    <citation type="journal article" date="2011" name="PLoS Genet.">
        <title>Comparative genomic analysis of human fungal pathogens causing paracoccidioidomycosis.</title>
        <authorList>
            <person name="Desjardins C.A."/>
            <person name="Champion M.D."/>
            <person name="Holder J.W."/>
            <person name="Muszewska A."/>
            <person name="Goldberg J."/>
            <person name="Bailao A.M."/>
            <person name="Brigido M.M."/>
            <person name="Ferreira M.E."/>
            <person name="Garcia A.M."/>
            <person name="Grynberg M."/>
            <person name="Gujja S."/>
            <person name="Heiman D.I."/>
            <person name="Henn M.R."/>
            <person name="Kodira C.D."/>
            <person name="Leon-Narvaez H."/>
            <person name="Longo L.V.G."/>
            <person name="Ma L.-J."/>
            <person name="Malavazi I."/>
            <person name="Matsuo A.L."/>
            <person name="Morais F.V."/>
            <person name="Pereira M."/>
            <person name="Rodriguez-Brito S."/>
            <person name="Sakthikumar S."/>
            <person name="Salem-Izacc S.M."/>
            <person name="Sykes S.M."/>
            <person name="Teixeira M.M."/>
            <person name="Vallejo M.C."/>
            <person name="Walter M.E."/>
            <person name="Yandava C."/>
            <person name="Young S."/>
            <person name="Zeng Q."/>
            <person name="Zucker J."/>
            <person name="Felipe M.S."/>
            <person name="Goldman G.H."/>
            <person name="Haas B.J."/>
            <person name="McEwen J.G."/>
            <person name="Nino-Vega G."/>
            <person name="Puccia R."/>
            <person name="San-Blas G."/>
            <person name="Soares C.M."/>
            <person name="Birren B.W."/>
            <person name="Cuomo C.A."/>
        </authorList>
    </citation>
    <scope>NUCLEOTIDE SEQUENCE [LARGE SCALE GENOMIC DNA]</scope>
    <source>
        <strain>ATCC MYA-826 / Pb01</strain>
    </source>
</reference>
<feature type="chain" id="PRO_0000384240" description="Maintenance of mitochondrial morphology protein 1">
    <location>
        <begin position="1"/>
        <end position="523"/>
    </location>
</feature>
<feature type="topological domain" description="Lumenal" evidence="1">
    <location>
        <begin position="1"/>
        <end position="43"/>
    </location>
</feature>
<feature type="transmembrane region" description="Helical" evidence="1">
    <location>
        <begin position="44"/>
        <end position="64"/>
    </location>
</feature>
<feature type="topological domain" description="Cytoplasmic" evidence="1">
    <location>
        <begin position="65"/>
        <end position="523"/>
    </location>
</feature>
<feature type="domain" description="SMP-LTD" evidence="1">
    <location>
        <begin position="151"/>
        <end position="412"/>
    </location>
</feature>
<feature type="region of interest" description="Disordered" evidence="2">
    <location>
        <begin position="70"/>
        <end position="118"/>
    </location>
</feature>
<feature type="region of interest" description="Disordered" evidence="2">
    <location>
        <begin position="128"/>
        <end position="147"/>
    </location>
</feature>
<feature type="region of interest" description="Disordered" evidence="2">
    <location>
        <begin position="295"/>
        <end position="349"/>
    </location>
</feature>
<feature type="region of interest" description="Disordered" evidence="2">
    <location>
        <begin position="420"/>
        <end position="474"/>
    </location>
</feature>
<feature type="region of interest" description="Disordered" evidence="2">
    <location>
        <begin position="492"/>
        <end position="523"/>
    </location>
</feature>
<feature type="compositionally biased region" description="Polar residues" evidence="2">
    <location>
        <begin position="74"/>
        <end position="96"/>
    </location>
</feature>
<feature type="compositionally biased region" description="Polar residues" evidence="2">
    <location>
        <begin position="105"/>
        <end position="118"/>
    </location>
</feature>
<feature type="compositionally biased region" description="Basic residues" evidence="2">
    <location>
        <begin position="137"/>
        <end position="147"/>
    </location>
</feature>
<feature type="compositionally biased region" description="Polar residues" evidence="2">
    <location>
        <begin position="295"/>
        <end position="312"/>
    </location>
</feature>
<feature type="compositionally biased region" description="Gly residues" evidence="2">
    <location>
        <begin position="449"/>
        <end position="468"/>
    </location>
</feature>
<evidence type="ECO:0000255" key="1">
    <source>
        <dbReference type="HAMAP-Rule" id="MF_03103"/>
    </source>
</evidence>
<evidence type="ECO:0000256" key="2">
    <source>
        <dbReference type="SAM" id="MobiDB-lite"/>
    </source>
</evidence>
<sequence length="523" mass="55810">MAGSTSASLQTPYFPSSTQINPVRVDHTLPLPPSQPSLSFTQGLLVGQLSVVLLIGAFIKFFIFGEAPPPPSRGLSNRTSTHPRSYSINAASTDSSPRPLREKPSTSNILRPVPSSSTNTRSILRKTYYSATPTHPTPKHGRPRLYHSSHQPESLDWFNVLIAQTIAQYRQTAYILKDSPTSSILASLSETLNNPEKKPSFIDIIKVTDISLGEEFPIFSNCRVIAVEDPNSDGGRLQALMDVDLSDDNLSLAIETSLLLNYPKPFSAVLPVALAVSVVRFSGTLCISFVPGPRTSDQTMSPIPTPHDTTSEAIDDQSSDQPSPAQNPDGPKDAHANTSNTTDASSKHGIPKTSLAFSFLPDYRLDLSVRSLIGSRSRLQDVPKVAQLVEARVQSWFEERVVEPRVQVVGLPNIWPRMGRTGLRSSQEEPEAGSGSVEIPVMTSPGADGVSGGGGSGGGSGGGGGGMRGIDRGLSGREAGYEALRYRHAACGGHQNQSGRDGGRGGNEQFAMPGSMPDTVTET</sequence>
<protein>
    <recommendedName>
        <fullName evidence="1">Maintenance of mitochondrial morphology protein 1</fullName>
    </recommendedName>
</protein>
<comment type="function">
    <text evidence="1">Component of the ERMES/MDM complex, which serves as a molecular tether to connect the endoplasmic reticulum (ER) and mitochondria. Components of this complex are involved in the control of mitochondrial shape and protein biogenesis, and function in nonvesicular lipid trafficking between the ER and mitochondria. The MDM12-MMM1 subcomplex functions in the major beta-barrel assembly pathway that is responsible for biogenesis of all outer membrane beta-barrel proteins, and acts in a late step after the SAM complex. The MDM10-MDM12-MMM1 subcomplex further acts in the TOM40-specific pathway after the action of the MDM12-MMM1 complex. Essential for establishing and maintaining the structure of mitochondria and maintenance of mtDNA nucleoids.</text>
</comment>
<comment type="subunit">
    <text evidence="1">Homodimer. Component of the ER-mitochondria encounter structure (ERMES) or MDM complex, composed of MMM1, MDM10, MDM12 and MDM34. A MMM1 homodimer associates with one molecule of MDM12 on each side in a pairwise head-to-tail manner, and the SMP-LTD domains of MMM1 and MDM12 generate a continuous hydrophobic tunnel for phospholipid trafficking.</text>
</comment>
<comment type="subcellular location">
    <subcellularLocation>
        <location evidence="1">Endoplasmic reticulum membrane</location>
        <topology evidence="1">Single-pass type I membrane protein</topology>
    </subcellularLocation>
    <text evidence="1">The ERMES/MDM complex localizes to a few discrete foci (around 10 per single cell), that represent mitochondria-endoplasmic reticulum junctions. These foci are often found next to mtDNA nucleoids.</text>
</comment>
<comment type="domain">
    <text evidence="1">The SMP-LTD domain is a barrel-like domain that can bind various types of glycerophospholipids in its interior and mediate their transfer between two adjacent bilayers.</text>
</comment>
<comment type="similarity">
    <text evidence="1">Belongs to the MMM1 family.</text>
</comment>
<organism>
    <name type="scientific">Paracoccidioides lutzii (strain ATCC MYA-826 / Pb01)</name>
    <name type="common">Paracoccidioides brasiliensis</name>
    <dbReference type="NCBI Taxonomy" id="502779"/>
    <lineage>
        <taxon>Eukaryota</taxon>
        <taxon>Fungi</taxon>
        <taxon>Dikarya</taxon>
        <taxon>Ascomycota</taxon>
        <taxon>Pezizomycotina</taxon>
        <taxon>Eurotiomycetes</taxon>
        <taxon>Eurotiomycetidae</taxon>
        <taxon>Onygenales</taxon>
        <taxon>Ajellomycetaceae</taxon>
        <taxon>Paracoccidioides</taxon>
    </lineage>
</organism>
<proteinExistence type="inferred from homology"/>
<accession>C1GXJ4</accession>
<dbReference type="EMBL" id="KN293998">
    <property type="protein sequence ID" value="EEH41282.1"/>
    <property type="molecule type" value="Genomic_DNA"/>
</dbReference>
<dbReference type="RefSeq" id="XP_002795023.1">
    <property type="nucleotide sequence ID" value="XM_002794977.1"/>
</dbReference>
<dbReference type="SMR" id="C1GXJ4"/>
<dbReference type="STRING" id="502779.C1GXJ4"/>
<dbReference type="GeneID" id="9098364"/>
<dbReference type="KEGG" id="pbl:PAAG_03568"/>
<dbReference type="VEuPathDB" id="FungiDB:PAAG_03568"/>
<dbReference type="eggNOG" id="ENOG502QUUW">
    <property type="taxonomic scope" value="Eukaryota"/>
</dbReference>
<dbReference type="HOGENOM" id="CLU_032730_2_0_1"/>
<dbReference type="OMA" id="NIWPRMG"/>
<dbReference type="OrthoDB" id="5376138at2759"/>
<dbReference type="Proteomes" id="UP000002059">
    <property type="component" value="Partially assembled WGS sequence"/>
</dbReference>
<dbReference type="GO" id="GO:0005789">
    <property type="term" value="C:endoplasmic reticulum membrane"/>
    <property type="evidence" value="ECO:0007669"/>
    <property type="project" value="UniProtKB-SubCell"/>
</dbReference>
<dbReference type="GO" id="GO:0032865">
    <property type="term" value="C:ERMES complex"/>
    <property type="evidence" value="ECO:0007669"/>
    <property type="project" value="UniProtKB-UniRule"/>
</dbReference>
<dbReference type="GO" id="GO:0008289">
    <property type="term" value="F:lipid binding"/>
    <property type="evidence" value="ECO:0007669"/>
    <property type="project" value="UniProtKB-KW"/>
</dbReference>
<dbReference type="GO" id="GO:0000002">
    <property type="term" value="P:mitochondrial genome maintenance"/>
    <property type="evidence" value="ECO:0007669"/>
    <property type="project" value="UniProtKB-UniRule"/>
</dbReference>
<dbReference type="GO" id="GO:1990456">
    <property type="term" value="P:mitochondrion-endoplasmic reticulum membrane tethering"/>
    <property type="evidence" value="ECO:0007669"/>
    <property type="project" value="TreeGrafter"/>
</dbReference>
<dbReference type="GO" id="GO:0015914">
    <property type="term" value="P:phospholipid transport"/>
    <property type="evidence" value="ECO:0007669"/>
    <property type="project" value="TreeGrafter"/>
</dbReference>
<dbReference type="GO" id="GO:0045040">
    <property type="term" value="P:protein insertion into mitochondrial outer membrane"/>
    <property type="evidence" value="ECO:0007669"/>
    <property type="project" value="UniProtKB-UniRule"/>
</dbReference>
<dbReference type="CDD" id="cd21671">
    <property type="entry name" value="SMP_Mmm1"/>
    <property type="match status" value="1"/>
</dbReference>
<dbReference type="HAMAP" id="MF_03103">
    <property type="entry name" value="Mmm1"/>
    <property type="match status" value="1"/>
</dbReference>
<dbReference type="InterPro" id="IPR027537">
    <property type="entry name" value="Mmm1"/>
</dbReference>
<dbReference type="InterPro" id="IPR019411">
    <property type="entry name" value="MMM1_dom"/>
</dbReference>
<dbReference type="InterPro" id="IPR031468">
    <property type="entry name" value="SMP_LBD"/>
</dbReference>
<dbReference type="PANTHER" id="PTHR13466:SF0">
    <property type="entry name" value="SMP-LTD DOMAIN-CONTAINING PROTEIN"/>
    <property type="match status" value="1"/>
</dbReference>
<dbReference type="PANTHER" id="PTHR13466">
    <property type="entry name" value="TEX2 PROTEIN-RELATED"/>
    <property type="match status" value="1"/>
</dbReference>
<dbReference type="Pfam" id="PF10296">
    <property type="entry name" value="MMM1"/>
    <property type="match status" value="1"/>
</dbReference>
<dbReference type="PROSITE" id="PS51847">
    <property type="entry name" value="SMP"/>
    <property type="match status" value="1"/>
</dbReference>